<feature type="chain" id="PRO_0000399935" description="High mobility group B protein 10">
    <location>
        <begin position="1"/>
        <end position="319"/>
    </location>
</feature>
<feature type="domain" description="ARID" evidence="3">
    <location>
        <begin position="40"/>
        <end position="131"/>
    </location>
</feature>
<feature type="DNA-binding region" description="HMG box" evidence="2">
    <location>
        <begin position="238"/>
        <end position="305"/>
    </location>
</feature>
<feature type="region of interest" description="Disordered" evidence="4">
    <location>
        <begin position="1"/>
        <end position="25"/>
    </location>
</feature>
<feature type="region of interest" description="Disordered" evidence="4">
    <location>
        <begin position="203"/>
        <end position="230"/>
    </location>
</feature>
<feature type="compositionally biased region" description="Polar residues" evidence="4">
    <location>
        <begin position="1"/>
        <end position="13"/>
    </location>
</feature>
<feature type="compositionally biased region" description="Polar residues" evidence="4">
    <location>
        <begin position="203"/>
        <end position="220"/>
    </location>
</feature>
<evidence type="ECO:0000250" key="1"/>
<evidence type="ECO:0000255" key="2">
    <source>
        <dbReference type="PROSITE-ProRule" id="PRU00267"/>
    </source>
</evidence>
<evidence type="ECO:0000255" key="3">
    <source>
        <dbReference type="PROSITE-ProRule" id="PRU00355"/>
    </source>
</evidence>
<evidence type="ECO:0000256" key="4">
    <source>
        <dbReference type="SAM" id="MobiDB-lite"/>
    </source>
</evidence>
<evidence type="ECO:0000269" key="5">
    <source>
    </source>
</evidence>
<accession>Q9LTT3</accession>
<name>HMG10_ARATH</name>
<keyword id="KW-0238">DNA-binding</keyword>
<keyword id="KW-0539">Nucleus</keyword>
<keyword id="KW-1185">Reference proteome</keyword>
<keyword id="KW-0804">Transcription</keyword>
<keyword id="KW-0805">Transcription regulation</keyword>
<comment type="function">
    <text evidence="1">Binds preferentially DNA with A/T-rich content.</text>
</comment>
<comment type="interaction">
    <interactant intactId="EBI-4473135">
        <id>Q9LTT3</id>
    </interactant>
    <interactant intactId="EBI-15201560">
        <id>Q9LG02</id>
        <label>HMGB11</label>
    </interactant>
    <organismsDiffer>false</organismsDiffer>
    <experiments>3</experiments>
</comment>
<comment type="subcellular location">
    <subcellularLocation>
        <location evidence="2 3 5">Nucleus</location>
    </subcellularLocation>
</comment>
<comment type="tissue specificity">
    <text evidence="5">Ubiquitously expressed.</text>
</comment>
<organism>
    <name type="scientific">Arabidopsis thaliana</name>
    <name type="common">Mouse-ear cress</name>
    <dbReference type="NCBI Taxonomy" id="3702"/>
    <lineage>
        <taxon>Eukaryota</taxon>
        <taxon>Viridiplantae</taxon>
        <taxon>Streptophyta</taxon>
        <taxon>Embryophyta</taxon>
        <taxon>Tracheophyta</taxon>
        <taxon>Spermatophyta</taxon>
        <taxon>Magnoliopsida</taxon>
        <taxon>eudicotyledons</taxon>
        <taxon>Gunneridae</taxon>
        <taxon>Pentapetalae</taxon>
        <taxon>rosids</taxon>
        <taxon>malvids</taxon>
        <taxon>Brassicales</taxon>
        <taxon>Brassicaceae</taxon>
        <taxon>Camelineae</taxon>
        <taxon>Arabidopsis</taxon>
    </lineage>
</organism>
<sequence length="319" mass="36296">MSTDISPPYSQTHVEPVNGYPSDNKRCDDSSVPAKYDDLVRNSALFWEKLRAFLGLTSKTLKVPTVGGNTLDLHRLFIEVTSRGGIERVVKDRKWKEVIGAFSFPTTITSASFVLRKYYLKFLFQLEHVYYLEKPVSSLQSTDEALKSLANESPNPEEGIDEPQVGYEVQGFIDGKFDSGYLVTMKLGSQELKGVLYHIPQTPSQSQQTMETPSAIVQSSQRRHRKKSKLAVVDTQKPKCHRSGYNFFFAEQYARLKPEYHGQERSITKKIGHMWSNLTESEKQVYQDKGVKDVERYRIEMLEYKSSHESGATASTVAQ</sequence>
<reference key="1">
    <citation type="journal article" date="2000" name="DNA Res.">
        <title>Structural analysis of Arabidopsis thaliana chromosome 3. I. Sequence features of the regions of 4,504,864 bp covered by sixty P1 and TAC clones.</title>
        <authorList>
            <person name="Sato S."/>
            <person name="Nakamura Y."/>
            <person name="Kaneko T."/>
            <person name="Katoh T."/>
            <person name="Asamizu E."/>
            <person name="Tabata S."/>
        </authorList>
    </citation>
    <scope>NUCLEOTIDE SEQUENCE [LARGE SCALE GENOMIC DNA]</scope>
    <source>
        <strain>cv. Columbia</strain>
    </source>
</reference>
<reference key="2">
    <citation type="journal article" date="2017" name="Plant J.">
        <title>Araport11: a complete reannotation of the Arabidopsis thaliana reference genome.</title>
        <authorList>
            <person name="Cheng C.Y."/>
            <person name="Krishnakumar V."/>
            <person name="Chan A.P."/>
            <person name="Thibaud-Nissen F."/>
            <person name="Schobel S."/>
            <person name="Town C.D."/>
        </authorList>
    </citation>
    <scope>GENOME REANNOTATION</scope>
    <source>
        <strain>cv. Columbia</strain>
    </source>
</reference>
<reference key="3">
    <citation type="journal article" date="2003" name="Science">
        <title>Empirical analysis of transcriptional activity in the Arabidopsis genome.</title>
        <authorList>
            <person name="Yamada K."/>
            <person name="Lim J."/>
            <person name="Dale J.M."/>
            <person name="Chen H."/>
            <person name="Shinn P."/>
            <person name="Palm C.J."/>
            <person name="Southwick A.M."/>
            <person name="Wu H.C."/>
            <person name="Kim C.J."/>
            <person name="Nguyen M."/>
            <person name="Pham P.K."/>
            <person name="Cheuk R.F."/>
            <person name="Karlin-Newmann G."/>
            <person name="Liu S.X."/>
            <person name="Lam B."/>
            <person name="Sakano H."/>
            <person name="Wu T."/>
            <person name="Yu G."/>
            <person name="Miranda M."/>
            <person name="Quach H.L."/>
            <person name="Tripp M."/>
            <person name="Chang C.H."/>
            <person name="Lee J.M."/>
            <person name="Toriumi M.J."/>
            <person name="Chan M.M."/>
            <person name="Tang C.C."/>
            <person name="Onodera C.S."/>
            <person name="Deng J.M."/>
            <person name="Akiyama K."/>
            <person name="Ansari Y."/>
            <person name="Arakawa T."/>
            <person name="Banh J."/>
            <person name="Banno F."/>
            <person name="Bowser L."/>
            <person name="Brooks S.Y."/>
            <person name="Carninci P."/>
            <person name="Chao Q."/>
            <person name="Choy N."/>
            <person name="Enju A."/>
            <person name="Goldsmith A.D."/>
            <person name="Gurjal M."/>
            <person name="Hansen N.F."/>
            <person name="Hayashizaki Y."/>
            <person name="Johnson-Hopson C."/>
            <person name="Hsuan V.W."/>
            <person name="Iida K."/>
            <person name="Karnes M."/>
            <person name="Khan S."/>
            <person name="Koesema E."/>
            <person name="Ishida J."/>
            <person name="Jiang P.X."/>
            <person name="Jones T."/>
            <person name="Kawai J."/>
            <person name="Kamiya A."/>
            <person name="Meyers C."/>
            <person name="Nakajima M."/>
            <person name="Narusaka M."/>
            <person name="Seki M."/>
            <person name="Sakurai T."/>
            <person name="Satou M."/>
            <person name="Tamse R."/>
            <person name="Vaysberg M."/>
            <person name="Wallender E.K."/>
            <person name="Wong C."/>
            <person name="Yamamura Y."/>
            <person name="Yuan S."/>
            <person name="Shinozaki K."/>
            <person name="Davis R.W."/>
            <person name="Theologis A."/>
            <person name="Ecker J.R."/>
        </authorList>
    </citation>
    <scope>NUCLEOTIDE SEQUENCE [LARGE SCALE MRNA]</scope>
    <source>
        <strain>cv. Columbia</strain>
    </source>
</reference>
<reference key="4">
    <citation type="submission" date="2002-03" db="EMBL/GenBank/DDBJ databases">
        <title>Full-length cDNA from Arabidopsis thaliana.</title>
        <authorList>
            <person name="Brover V.V."/>
            <person name="Troukhan M.E."/>
            <person name="Alexandrov N.A."/>
            <person name="Lu Y.-P."/>
            <person name="Flavell R.B."/>
            <person name="Feldmann K.A."/>
        </authorList>
    </citation>
    <scope>NUCLEOTIDE SEQUENCE [LARGE SCALE MRNA]</scope>
</reference>
<reference key="5">
    <citation type="journal article" date="2008" name="Biochemistry">
        <title>A novel family of plant DNA-binding proteins containing both HMG-box and AT-rich interaction domains.</title>
        <authorList>
            <person name="Hansen F.T."/>
            <person name="Madsen C.K."/>
            <person name="Nordland A.M."/>
            <person name="Grasser M."/>
            <person name="Merkle T."/>
            <person name="Grasser K.D."/>
        </authorList>
    </citation>
    <scope>TISSUE SPECIFICITY</scope>
    <scope>SUBCELLULAR LOCATION</scope>
</reference>
<gene>
    <name type="primary">HMGB10</name>
    <name type="synonym">ARID-HMG2</name>
    <name type="synonym">NFD10</name>
    <name type="ordered locus">At3g13350</name>
    <name type="ORF">MDC11.14</name>
</gene>
<dbReference type="EMBL" id="AB024034">
    <property type="protein sequence ID" value="BAB02804.1"/>
    <property type="molecule type" value="Genomic_DNA"/>
</dbReference>
<dbReference type="EMBL" id="CP002686">
    <property type="protein sequence ID" value="AEE75337.1"/>
    <property type="molecule type" value="Genomic_DNA"/>
</dbReference>
<dbReference type="EMBL" id="AF361582">
    <property type="protein sequence ID" value="AAK32750.1"/>
    <property type="molecule type" value="mRNA"/>
</dbReference>
<dbReference type="EMBL" id="AY133557">
    <property type="protein sequence ID" value="AAM91387.1"/>
    <property type="molecule type" value="mRNA"/>
</dbReference>
<dbReference type="EMBL" id="AY087770">
    <property type="protein sequence ID" value="AAM65306.1"/>
    <property type="molecule type" value="mRNA"/>
</dbReference>
<dbReference type="RefSeq" id="NP_566454.1">
    <property type="nucleotide sequence ID" value="NM_112180.4"/>
</dbReference>
<dbReference type="SMR" id="Q9LTT3"/>
<dbReference type="BioGRID" id="5869">
    <property type="interactions" value="8"/>
</dbReference>
<dbReference type="FunCoup" id="Q9LTT3">
    <property type="interactions" value="1696"/>
</dbReference>
<dbReference type="IntAct" id="Q9LTT3">
    <property type="interactions" value="8"/>
</dbReference>
<dbReference type="STRING" id="3702.Q9LTT3"/>
<dbReference type="iPTMnet" id="Q9LTT3"/>
<dbReference type="PaxDb" id="3702-AT3G13350.1"/>
<dbReference type="ProteomicsDB" id="228803"/>
<dbReference type="EnsemblPlants" id="AT3G13350.1">
    <property type="protein sequence ID" value="AT3G13350.1"/>
    <property type="gene ID" value="AT3G13350"/>
</dbReference>
<dbReference type="GeneID" id="820535"/>
<dbReference type="Gramene" id="AT3G13350.1">
    <property type="protein sequence ID" value="AT3G13350.1"/>
    <property type="gene ID" value="AT3G13350"/>
</dbReference>
<dbReference type="KEGG" id="ath:AT3G13350"/>
<dbReference type="Araport" id="AT3G13350"/>
<dbReference type="TAIR" id="AT3G13350"/>
<dbReference type="eggNOG" id="KOG0381">
    <property type="taxonomic scope" value="Eukaryota"/>
</dbReference>
<dbReference type="eggNOG" id="KOG2744">
    <property type="taxonomic scope" value="Eukaryota"/>
</dbReference>
<dbReference type="HOGENOM" id="CLU_035371_0_0_1"/>
<dbReference type="InParanoid" id="Q9LTT3"/>
<dbReference type="OMA" id="YYGQEKA"/>
<dbReference type="PhylomeDB" id="Q9LTT3"/>
<dbReference type="PRO" id="PR:Q9LTT3"/>
<dbReference type="Proteomes" id="UP000006548">
    <property type="component" value="Chromosome 3"/>
</dbReference>
<dbReference type="ExpressionAtlas" id="Q9LTT3">
    <property type="expression patterns" value="baseline and differential"/>
</dbReference>
<dbReference type="GO" id="GO:0005634">
    <property type="term" value="C:nucleus"/>
    <property type="evidence" value="ECO:0007669"/>
    <property type="project" value="UniProtKB-SubCell"/>
</dbReference>
<dbReference type="GO" id="GO:0003677">
    <property type="term" value="F:DNA binding"/>
    <property type="evidence" value="ECO:0007669"/>
    <property type="project" value="UniProtKB-KW"/>
</dbReference>
<dbReference type="GO" id="GO:0003700">
    <property type="term" value="F:DNA-binding transcription factor activity"/>
    <property type="evidence" value="ECO:0000250"/>
    <property type="project" value="TAIR"/>
</dbReference>
<dbReference type="CDD" id="cd16872">
    <property type="entry name" value="ARID_HMGB9-like"/>
    <property type="match status" value="1"/>
</dbReference>
<dbReference type="CDD" id="cd22009">
    <property type="entry name" value="HMG-box_AtHMGB9-like"/>
    <property type="match status" value="1"/>
</dbReference>
<dbReference type="FunFam" id="1.10.150.60:FF:000022">
    <property type="entry name" value="High mobility group B protein 15"/>
    <property type="match status" value="1"/>
</dbReference>
<dbReference type="FunFam" id="1.10.30.10:FF:000055">
    <property type="entry name" value="High mobility group B protein 15"/>
    <property type="match status" value="1"/>
</dbReference>
<dbReference type="Gene3D" id="1.10.150.60">
    <property type="entry name" value="ARID DNA-binding domain"/>
    <property type="match status" value="1"/>
</dbReference>
<dbReference type="Gene3D" id="1.10.30.10">
    <property type="entry name" value="High mobility group box domain"/>
    <property type="match status" value="1"/>
</dbReference>
<dbReference type="InterPro" id="IPR001606">
    <property type="entry name" value="ARID_dom"/>
</dbReference>
<dbReference type="InterPro" id="IPR036431">
    <property type="entry name" value="ARID_dom_sf"/>
</dbReference>
<dbReference type="InterPro" id="IPR045303">
    <property type="entry name" value="ARID_HMGB9-like"/>
</dbReference>
<dbReference type="InterPro" id="IPR009071">
    <property type="entry name" value="HMG_box_dom"/>
</dbReference>
<dbReference type="InterPro" id="IPR036910">
    <property type="entry name" value="HMG_box_dom_sf"/>
</dbReference>
<dbReference type="PANTHER" id="PTHR46691:SF6">
    <property type="entry name" value="HIGH MOBILITY GROUP B PROTEIN 10-RELATED"/>
    <property type="match status" value="1"/>
</dbReference>
<dbReference type="PANTHER" id="PTHR46691">
    <property type="entry name" value="HIGH MOBILITY GROUP B PROTEIN 9"/>
    <property type="match status" value="1"/>
</dbReference>
<dbReference type="Pfam" id="PF01388">
    <property type="entry name" value="ARID"/>
    <property type="match status" value="1"/>
</dbReference>
<dbReference type="Pfam" id="PF00505">
    <property type="entry name" value="HMG_box"/>
    <property type="match status" value="1"/>
</dbReference>
<dbReference type="SMART" id="SM01014">
    <property type="entry name" value="ARID"/>
    <property type="match status" value="1"/>
</dbReference>
<dbReference type="SMART" id="SM00501">
    <property type="entry name" value="BRIGHT"/>
    <property type="match status" value="1"/>
</dbReference>
<dbReference type="SMART" id="SM00398">
    <property type="entry name" value="HMG"/>
    <property type="match status" value="1"/>
</dbReference>
<dbReference type="SUPFAM" id="SSF46774">
    <property type="entry name" value="ARID-like"/>
    <property type="match status" value="1"/>
</dbReference>
<dbReference type="SUPFAM" id="SSF47095">
    <property type="entry name" value="HMG-box"/>
    <property type="match status" value="1"/>
</dbReference>
<dbReference type="PROSITE" id="PS51011">
    <property type="entry name" value="ARID"/>
    <property type="match status" value="1"/>
</dbReference>
<dbReference type="PROSITE" id="PS50118">
    <property type="entry name" value="HMG_BOX_2"/>
    <property type="match status" value="1"/>
</dbReference>
<proteinExistence type="evidence at protein level"/>
<protein>
    <recommendedName>
        <fullName>High mobility group B protein 10</fullName>
    </recommendedName>
    <alternativeName>
        <fullName>Nucleosome/chromatin assembly factor group D 10</fullName>
    </alternativeName>
</protein>